<feature type="chain" id="PRO_0000127130" description="Achaete-scute homolog 2">
    <location>
        <begin position="1"/>
        <end position="193"/>
    </location>
</feature>
<feature type="domain" description="bHLH" evidence="3">
    <location>
        <begin position="50"/>
        <end position="102"/>
    </location>
</feature>
<feature type="region of interest" description="Disordered" evidence="4">
    <location>
        <begin position="1"/>
        <end position="27"/>
    </location>
</feature>
<feature type="region of interest" description="Disordered" evidence="4">
    <location>
        <begin position="37"/>
        <end position="56"/>
    </location>
</feature>
<feature type="region of interest" description="Disordered" evidence="4">
    <location>
        <begin position="118"/>
        <end position="177"/>
    </location>
</feature>
<feature type="compositionally biased region" description="Low complexity" evidence="4">
    <location>
        <begin position="140"/>
        <end position="150"/>
    </location>
</feature>
<keyword id="KW-0217">Developmental protein</keyword>
<keyword id="KW-0221">Differentiation</keyword>
<keyword id="KW-0238">DNA-binding</keyword>
<keyword id="KW-0524">Neurogenesis</keyword>
<keyword id="KW-0539">Nucleus</keyword>
<keyword id="KW-1267">Proteomics identification</keyword>
<keyword id="KW-1185">Reference proteome</keyword>
<gene>
    <name type="primary">ASCL2</name>
    <name type="synonym">BHLHA45</name>
    <name type="synonym">HASH2</name>
</gene>
<comment type="function">
    <text evidence="1 2">Transcription factor. Binds to E-box motifs 5'-CANNTG-3' in the regulatory elements of target genes, probably as a heterodimer with another basic helix-loop-helix (bHLH) protein such as the transcription factor TCF3. May bind both open and closed chromatin, acting as a pioneer transcription factor to allow other factors to bind and activate lineage-specific genes. Required during post-implantation development for the generation of some differentiated trophoblast cell types. Transcriptional activity of ASCL2 may be antagonised in a subset of trophoblast cells by bHLH transcription factor HAND1, perhaps by competing for dimerization with other bHLH proteins. Involved in differentiation and function of follicular T-helper (Tfh) cells, thereby playing a role in germinal center responses; probably modulates expression of genes involved in Tfh cell function, such as BCL6. May also act as a suppressor of Th1-, Th2- and Th17-cell differentiation. Induces the formation of stem cells in intestinal crypts in vitro, synergistically activating transcription of target genes, such as SOX9, together with TCF4/beta-catenin. May form a bistable transcriptional switch, controlling expression of its own gene together with Wnt/R-spondin signaling, and thereby maintaining stem cell characteristics (By similarity). Modulates expression of target genes, including perhaps down-regulating EGR1/Krox24 and chemokine CXCL10/Mob-1 and up-regulating CXCR4 and CDKN1C/p57kip2, in Schwann cells. May play a role in reducing proliferation of Schwann cells, perhaps acting via modulation of expression of CDKN1C (By similarity). May be dispensable for blastocyst formation and later embryonic function (By similarity). May be involved in the determination of neuronal precursors (By similarity).</text>
</comment>
<comment type="subunit">
    <text evidence="1">Efficient DNA binding requires dimerization with another basic helix-loop-helix (bHLH) protein. Forms heterodimers with bHLH transcription factor TCF3. May not heterodimerise with bHLH protein HAND1.</text>
</comment>
<comment type="subcellular location">
    <subcellularLocation>
        <location evidence="3 5">Nucleus</location>
    </subcellularLocation>
</comment>
<comment type="tissue specificity">
    <text evidence="6 7 8">Expressed in the placenta at a stage between the first and second trimesters and when it matures, at about 32-36 weeks (PubMed:12099555). Expressed in the extravillous trophoblasts, the intermediate trophoblasts, and at lower levels in the cytotrophoblasts and stroma of chorionic villi of the developing placenta (PubMed:12099555, PubMed:9175731). Expressed in follicular T-helper (Tfh) cells (PubMed:24463518).</text>
</comment>
<comment type="developmental stage">
    <text evidence="6">Expressed in the ectoderm but not in the mesoderm or endoderm of the fetus at the second trimester (PubMed:12099555). At the second trimester, expressed in photoreceptor, bipolar, and ganglion cells of the retina, and in developing skin cells (PubMed:12099555). Expressed in developing neuronal cells of the brain and the spinal cord, but not in the peripheral nerves (PubMed:12099555).</text>
</comment>
<comment type="miscellaneous">
    <text evidence="6">In contrast to the mouse ortholog, the ASCL2 locus is not imprinted in human placenta.</text>
</comment>
<proteinExistence type="evidence at protein level"/>
<sequence length="193" mass="20185">MDGGTLPRSAPPAPPVPVGCAARRRPASPELLRCSRRRRPATAETGGGAAAVARRNERERNRVKLVNLGFQALRQHVPHGGASKKLSKVETLRSAVEYIRALQRLLAEHDAVRNALAGGLRPQAVRPSAPRGPPGTTPVAASPSRASSSPGRGGSSEPGSPRSAYSSDDSGCEGALSPAERELLDFSSWLGGY</sequence>
<name>ASCL2_HUMAN</name>
<evidence type="ECO:0000250" key="1">
    <source>
        <dbReference type="UniProtKB" id="O35885"/>
    </source>
</evidence>
<evidence type="ECO:0000250" key="2">
    <source>
        <dbReference type="UniProtKB" id="P19360"/>
    </source>
</evidence>
<evidence type="ECO:0000255" key="3">
    <source>
        <dbReference type="PROSITE-ProRule" id="PRU00981"/>
    </source>
</evidence>
<evidence type="ECO:0000256" key="4">
    <source>
        <dbReference type="SAM" id="MobiDB-lite"/>
    </source>
</evidence>
<evidence type="ECO:0000269" key="5">
    <source>
    </source>
</evidence>
<evidence type="ECO:0000269" key="6">
    <source>
    </source>
</evidence>
<evidence type="ECO:0000269" key="7">
    <source>
    </source>
</evidence>
<evidence type="ECO:0000269" key="8">
    <source>
    </source>
</evidence>
<reference key="1">
    <citation type="journal article" date="1997" name="Hum. Mol. Genet.">
        <title>The human Achaete-Scute homologue 2 (ASCL2,HASH2) maps to chromosome 11p15.5, close to IGF2 and is expressed in extravillus trophoblasts.</title>
        <authorList>
            <person name="Alders M."/>
            <person name="Hodges M."/>
            <person name="Hadjantonakis A.-K."/>
            <person name="Postmus J."/>
            <person name="van Wijk I.J."/>
            <person name="Bliek J."/>
            <person name="de Meulemeester M."/>
            <person name="Westerveld A."/>
            <person name="Guillemot F."/>
            <person name="Oudejans C.B."/>
            <person name="Little P."/>
            <person name="Mannens M."/>
        </authorList>
    </citation>
    <scope>NUCLEOTIDE SEQUENCE [GENOMIC DNA]</scope>
</reference>
<reference key="2">
    <citation type="journal article" date="2001" name="Placenta">
        <title>The human Achaete Scute homolog 2 gene contains two promotors, generating overlapping transcripts and encoding two proteins with different nuclear localization.</title>
        <authorList>
            <person name="Westerman B.A."/>
            <person name="Poutsma A."/>
            <person name="Looijenga L.H."/>
            <person name="Wouters D."/>
            <person name="van Wijk I.J."/>
            <person name="Oudejans C.B."/>
        </authorList>
    </citation>
    <scope>NUCLEOTIDE SEQUENCE [GENOMIC DNA]</scope>
    <scope>SUBCELLULAR LOCATION</scope>
</reference>
<reference key="3">
    <citation type="journal article" date="2004" name="Genome Res.">
        <title>The status, quality, and expansion of the NIH full-length cDNA project: the Mammalian Gene Collection (MGC).</title>
        <authorList>
            <consortium name="The MGC Project Team"/>
        </authorList>
    </citation>
    <scope>NUCLEOTIDE SEQUENCE [LARGE SCALE MRNA]</scope>
</reference>
<reference key="4">
    <citation type="journal article" date="1996" name="Cytogenet. Cell Genet.">
        <title>Genomic cloning and localization to chromosome 11p15.5 of the human achaete-scute homolog 2 (ASCL2).</title>
        <authorList>
            <person name="Miyamoto T."/>
            <person name="Jinno Y."/>
            <person name="Sasaki T."/>
            <person name="Ikeda Y."/>
            <person name="Masuzaki H."/>
            <person name="Niikawa N."/>
            <person name="Ishikawa M."/>
        </authorList>
    </citation>
    <scope>NUCLEOTIDE SEQUENCE [GENOMIC DNA] OF 34-101</scope>
</reference>
<reference key="5">
    <citation type="journal article" date="2002" name="J. Assist. Reprod. Genet.">
        <title>The human ASCL2 gene escaping genomic imprinting and its expression pattern.</title>
        <authorList>
            <person name="Miyamoto T."/>
            <person name="Hasuike S."/>
            <person name="Jinno Y."/>
            <person name="Soejima H."/>
            <person name="Yun K."/>
            <person name="Miura K."/>
            <person name="Ishikawa M."/>
            <person name="Niikawa N."/>
        </authorList>
    </citation>
    <scope>TISSUE SPECIFICITY</scope>
    <scope>DEVELOPMENTAL STAGE</scope>
</reference>
<reference key="6">
    <citation type="journal article" date="2014" name="Nature">
        <title>Transcription factor achaete-scute homologue 2 initiates follicular T-helper-cell development.</title>
        <authorList>
            <person name="Liu X."/>
            <person name="Chen X."/>
            <person name="Zhong B."/>
            <person name="Wang A."/>
            <person name="Wang X."/>
            <person name="Chu F."/>
            <person name="Nurieva R.I."/>
            <person name="Yan X."/>
            <person name="Chen P."/>
            <person name="van der Flier L.G."/>
            <person name="Nakatsukasa H."/>
            <person name="Neelapu S.S."/>
            <person name="Chen W."/>
            <person name="Clevers H."/>
            <person name="Tian Q."/>
            <person name="Qi H."/>
            <person name="Wei L."/>
            <person name="Dong C."/>
        </authorList>
    </citation>
    <scope>TISSUE SPECIFICITY</scope>
</reference>
<organism>
    <name type="scientific">Homo sapiens</name>
    <name type="common">Human</name>
    <dbReference type="NCBI Taxonomy" id="9606"/>
    <lineage>
        <taxon>Eukaryota</taxon>
        <taxon>Metazoa</taxon>
        <taxon>Chordata</taxon>
        <taxon>Craniata</taxon>
        <taxon>Vertebrata</taxon>
        <taxon>Euteleostomi</taxon>
        <taxon>Mammalia</taxon>
        <taxon>Eutheria</taxon>
        <taxon>Euarchontoglires</taxon>
        <taxon>Primates</taxon>
        <taxon>Haplorrhini</taxon>
        <taxon>Catarrhini</taxon>
        <taxon>Hominidae</taxon>
        <taxon>Homo</taxon>
    </lineage>
</organism>
<dbReference type="EMBL" id="U77629">
    <property type="protein sequence ID" value="AAB86993.1"/>
    <property type="molecule type" value="Genomic_DNA"/>
</dbReference>
<dbReference type="EMBL" id="AF442769">
    <property type="protein sequence ID" value="AAL35362.1"/>
    <property type="molecule type" value="Genomic_DNA"/>
</dbReference>
<dbReference type="EMBL" id="BC057801">
    <property type="protein sequence ID" value="AAH57801.2"/>
    <property type="molecule type" value="mRNA"/>
</dbReference>
<dbReference type="EMBL" id="BC136561">
    <property type="protein sequence ID" value="AAI36562.1"/>
    <property type="molecule type" value="mRNA"/>
</dbReference>
<dbReference type="EMBL" id="BC136567">
    <property type="protein sequence ID" value="AAI36568.1"/>
    <property type="molecule type" value="mRNA"/>
</dbReference>
<dbReference type="EMBL" id="S82817">
    <property type="protein sequence ID" value="AAB39362.1"/>
    <property type="molecule type" value="Genomic_DNA"/>
</dbReference>
<dbReference type="CCDS" id="CCDS7732.1"/>
<dbReference type="RefSeq" id="NP_005161.1">
    <property type="nucleotide sequence ID" value="NM_005170.3"/>
</dbReference>
<dbReference type="SMR" id="Q99929"/>
<dbReference type="BioGRID" id="106922">
    <property type="interactions" value="8"/>
</dbReference>
<dbReference type="FunCoup" id="Q99929">
    <property type="interactions" value="339"/>
</dbReference>
<dbReference type="STRING" id="9606.ENSP00000332293"/>
<dbReference type="iPTMnet" id="Q99929"/>
<dbReference type="PhosphoSitePlus" id="Q99929"/>
<dbReference type="BioMuta" id="ASCL2"/>
<dbReference type="DMDM" id="12644476"/>
<dbReference type="jPOST" id="Q99929"/>
<dbReference type="MassIVE" id="Q99929"/>
<dbReference type="PaxDb" id="9606-ENSP00000332293"/>
<dbReference type="PeptideAtlas" id="Q99929"/>
<dbReference type="ProteomicsDB" id="78523"/>
<dbReference type="Antibodypedia" id="42100">
    <property type="antibodies" value="215 antibodies from 29 providers"/>
</dbReference>
<dbReference type="DNASU" id="430"/>
<dbReference type="Ensembl" id="ENST00000331289.5">
    <property type="protein sequence ID" value="ENSP00000332293.4"/>
    <property type="gene ID" value="ENSG00000183734.5"/>
</dbReference>
<dbReference type="GeneID" id="430"/>
<dbReference type="KEGG" id="hsa:430"/>
<dbReference type="MANE-Select" id="ENST00000331289.5">
    <property type="protein sequence ID" value="ENSP00000332293.4"/>
    <property type="RefSeq nucleotide sequence ID" value="NM_005170.3"/>
    <property type="RefSeq protein sequence ID" value="NP_005161.1"/>
</dbReference>
<dbReference type="UCSC" id="uc001lvu.4">
    <property type="organism name" value="human"/>
</dbReference>
<dbReference type="AGR" id="HGNC:739"/>
<dbReference type="CTD" id="430"/>
<dbReference type="DisGeNET" id="430"/>
<dbReference type="GeneCards" id="ASCL2"/>
<dbReference type="HGNC" id="HGNC:739">
    <property type="gene designation" value="ASCL2"/>
</dbReference>
<dbReference type="HPA" id="ENSG00000183734">
    <property type="expression patterns" value="Tissue enhanced (intestine, salivary gland, skin)"/>
</dbReference>
<dbReference type="MIM" id="601886">
    <property type="type" value="gene"/>
</dbReference>
<dbReference type="neXtProt" id="NX_Q99929"/>
<dbReference type="OpenTargets" id="ENSG00000183734"/>
<dbReference type="PharmGKB" id="PA25039"/>
<dbReference type="VEuPathDB" id="HostDB:ENSG00000183734"/>
<dbReference type="eggNOG" id="KOG4029">
    <property type="taxonomic scope" value="Eukaryota"/>
</dbReference>
<dbReference type="GeneTree" id="ENSGT00940000163041"/>
<dbReference type="HOGENOM" id="CLU_063523_2_0_1"/>
<dbReference type="InParanoid" id="Q99929"/>
<dbReference type="OMA" id="ACPRESC"/>
<dbReference type="OrthoDB" id="5976910at2759"/>
<dbReference type="PAN-GO" id="Q99929">
    <property type="GO annotations" value="7 GO annotations based on evolutionary models"/>
</dbReference>
<dbReference type="PhylomeDB" id="Q99929"/>
<dbReference type="TreeFam" id="TF322889"/>
<dbReference type="PathwayCommons" id="Q99929"/>
<dbReference type="SignaLink" id="Q99929"/>
<dbReference type="BioGRID-ORCS" id="430">
    <property type="hits" value="19 hits in 1168 CRISPR screens"/>
</dbReference>
<dbReference type="ChiTaRS" id="ASCL2">
    <property type="organism name" value="human"/>
</dbReference>
<dbReference type="GeneWiki" id="ASCL2"/>
<dbReference type="GenomeRNAi" id="430"/>
<dbReference type="Pharos" id="Q99929">
    <property type="development level" value="Tbio"/>
</dbReference>
<dbReference type="PRO" id="PR:Q99929"/>
<dbReference type="Proteomes" id="UP000005640">
    <property type="component" value="Chromosome 11"/>
</dbReference>
<dbReference type="RNAct" id="Q99929">
    <property type="molecule type" value="protein"/>
</dbReference>
<dbReference type="Bgee" id="ENSG00000183734">
    <property type="expression patterns" value="Expressed in granulocyte and 126 other cell types or tissues"/>
</dbReference>
<dbReference type="GO" id="GO:0000785">
    <property type="term" value="C:chromatin"/>
    <property type="evidence" value="ECO:0000247"/>
    <property type="project" value="NTNU_SB"/>
</dbReference>
<dbReference type="GO" id="GO:0005737">
    <property type="term" value="C:cytoplasm"/>
    <property type="evidence" value="ECO:0000314"/>
    <property type="project" value="UniProtKB"/>
</dbReference>
<dbReference type="GO" id="GO:0005634">
    <property type="term" value="C:nucleus"/>
    <property type="evidence" value="ECO:0000314"/>
    <property type="project" value="UniProtKB"/>
</dbReference>
<dbReference type="GO" id="GO:0090575">
    <property type="term" value="C:RNA polymerase II transcription regulator complex"/>
    <property type="evidence" value="ECO:0000318"/>
    <property type="project" value="GO_Central"/>
</dbReference>
<dbReference type="GO" id="GO:0043425">
    <property type="term" value="F:bHLH transcription factor binding"/>
    <property type="evidence" value="ECO:0007669"/>
    <property type="project" value="Ensembl"/>
</dbReference>
<dbReference type="GO" id="GO:0001228">
    <property type="term" value="F:DNA-binding transcription activator activity, RNA polymerase II-specific"/>
    <property type="evidence" value="ECO:0007669"/>
    <property type="project" value="Ensembl"/>
</dbReference>
<dbReference type="GO" id="GO:0000981">
    <property type="term" value="F:DNA-binding transcription factor activity, RNA polymerase II-specific"/>
    <property type="evidence" value="ECO:0000247"/>
    <property type="project" value="NTNU_SB"/>
</dbReference>
<dbReference type="GO" id="GO:0001227">
    <property type="term" value="F:DNA-binding transcription repressor activity, RNA polymerase II-specific"/>
    <property type="evidence" value="ECO:0000314"/>
    <property type="project" value="NTNU_SB"/>
</dbReference>
<dbReference type="GO" id="GO:0070888">
    <property type="term" value="F:E-box binding"/>
    <property type="evidence" value="ECO:0000314"/>
    <property type="project" value="UniProtKB"/>
</dbReference>
<dbReference type="GO" id="GO:0046983">
    <property type="term" value="F:protein dimerization activity"/>
    <property type="evidence" value="ECO:0007669"/>
    <property type="project" value="InterPro"/>
</dbReference>
<dbReference type="GO" id="GO:0000978">
    <property type="term" value="F:RNA polymerase II cis-regulatory region sequence-specific DNA binding"/>
    <property type="evidence" value="ECO:0000314"/>
    <property type="project" value="NTNU_SB"/>
</dbReference>
<dbReference type="GO" id="GO:0000977">
    <property type="term" value="F:RNA polymerase II transcription regulatory region sequence-specific DNA binding"/>
    <property type="evidence" value="ECO:0000318"/>
    <property type="project" value="GO_Central"/>
</dbReference>
<dbReference type="GO" id="GO:1990837">
    <property type="term" value="F:sequence-specific double-stranded DNA binding"/>
    <property type="evidence" value="ECO:0000314"/>
    <property type="project" value="ARUK-UCL"/>
</dbReference>
<dbReference type="GO" id="GO:0060719">
    <property type="term" value="P:chorionic trophoblast cell development"/>
    <property type="evidence" value="ECO:0007669"/>
    <property type="project" value="Ensembl"/>
</dbReference>
<dbReference type="GO" id="GO:0010626">
    <property type="term" value="P:negative regulation of Schwann cell proliferation"/>
    <property type="evidence" value="ECO:0007669"/>
    <property type="project" value="Ensembl"/>
</dbReference>
<dbReference type="GO" id="GO:0045626">
    <property type="term" value="P:negative regulation of T-helper 1 cell differentiation"/>
    <property type="evidence" value="ECO:0007669"/>
    <property type="project" value="Ensembl"/>
</dbReference>
<dbReference type="GO" id="GO:2000320">
    <property type="term" value="P:negative regulation of T-helper 17 cell differentiation"/>
    <property type="evidence" value="ECO:0007669"/>
    <property type="project" value="Ensembl"/>
</dbReference>
<dbReference type="GO" id="GO:0045629">
    <property type="term" value="P:negative regulation of T-helper 2 cell differentiation"/>
    <property type="evidence" value="ECO:0007669"/>
    <property type="project" value="Ensembl"/>
</dbReference>
<dbReference type="GO" id="GO:0000122">
    <property type="term" value="P:negative regulation of transcription by RNA polymerase II"/>
    <property type="evidence" value="ECO:0000314"/>
    <property type="project" value="UniProtKB"/>
</dbReference>
<dbReference type="GO" id="GO:0030182">
    <property type="term" value="P:neuron differentiation"/>
    <property type="evidence" value="ECO:0000318"/>
    <property type="project" value="GO_Central"/>
</dbReference>
<dbReference type="GO" id="GO:0001890">
    <property type="term" value="P:placenta development"/>
    <property type="evidence" value="ECO:0000303"/>
    <property type="project" value="UniProtKB"/>
</dbReference>
<dbReference type="GO" id="GO:2000406">
    <property type="term" value="P:positive regulation of T cell migration"/>
    <property type="evidence" value="ECO:0007669"/>
    <property type="project" value="Ensembl"/>
</dbReference>
<dbReference type="GO" id="GO:0045944">
    <property type="term" value="P:positive regulation of transcription by RNA polymerase II"/>
    <property type="evidence" value="ECO:0000318"/>
    <property type="project" value="GO_Central"/>
</dbReference>
<dbReference type="GO" id="GO:0050767">
    <property type="term" value="P:regulation of neurogenesis"/>
    <property type="evidence" value="ECO:0000318"/>
    <property type="project" value="GO_Central"/>
</dbReference>
<dbReference type="GO" id="GO:0001666">
    <property type="term" value="P:response to hypoxia"/>
    <property type="evidence" value="ECO:0000270"/>
    <property type="project" value="UniProtKB"/>
</dbReference>
<dbReference type="GO" id="GO:0007423">
    <property type="term" value="P:sensory organ development"/>
    <property type="evidence" value="ECO:0000318"/>
    <property type="project" value="GO_Central"/>
</dbReference>
<dbReference type="GO" id="GO:0035019">
    <property type="term" value="P:somatic stem cell population maintenance"/>
    <property type="evidence" value="ECO:0007669"/>
    <property type="project" value="Ensembl"/>
</dbReference>
<dbReference type="GO" id="GO:0060712">
    <property type="term" value="P:spongiotrophoblast layer development"/>
    <property type="evidence" value="ECO:0000270"/>
    <property type="project" value="UniProtKB"/>
</dbReference>
<dbReference type="GO" id="GO:0061470">
    <property type="term" value="P:T follicular helper cell differentiation"/>
    <property type="evidence" value="ECO:0007669"/>
    <property type="project" value="Ensembl"/>
</dbReference>
<dbReference type="CDD" id="cd19743">
    <property type="entry name" value="bHLH_TS_ASCL2_Mash2"/>
    <property type="match status" value="1"/>
</dbReference>
<dbReference type="FunFam" id="4.10.280.10:FF:000029">
    <property type="entry name" value="Achaete-scute family bHLH transcription factor 1"/>
    <property type="match status" value="1"/>
</dbReference>
<dbReference type="Gene3D" id="4.10.280.10">
    <property type="entry name" value="Helix-loop-helix DNA-binding domain"/>
    <property type="match status" value="1"/>
</dbReference>
<dbReference type="InterPro" id="IPR011598">
    <property type="entry name" value="bHLH_dom"/>
</dbReference>
<dbReference type="InterPro" id="IPR036638">
    <property type="entry name" value="HLH_DNA-bd_sf"/>
</dbReference>
<dbReference type="InterPro" id="IPR015660">
    <property type="entry name" value="MASH1/Ascl1a-like"/>
</dbReference>
<dbReference type="PANTHER" id="PTHR13935:SF62">
    <property type="entry name" value="ACHAETE-SCUTE HOMOLOG 2"/>
    <property type="match status" value="1"/>
</dbReference>
<dbReference type="PANTHER" id="PTHR13935">
    <property type="entry name" value="ACHAETE-SCUTE TRANSCRIPTION FACTOR-RELATED"/>
    <property type="match status" value="1"/>
</dbReference>
<dbReference type="Pfam" id="PF00010">
    <property type="entry name" value="HLH"/>
    <property type="match status" value="1"/>
</dbReference>
<dbReference type="SMART" id="SM00353">
    <property type="entry name" value="HLH"/>
    <property type="match status" value="1"/>
</dbReference>
<dbReference type="SUPFAM" id="SSF47459">
    <property type="entry name" value="HLH, helix-loop-helix DNA-binding domain"/>
    <property type="match status" value="1"/>
</dbReference>
<dbReference type="PROSITE" id="PS50888">
    <property type="entry name" value="BHLH"/>
    <property type="match status" value="1"/>
</dbReference>
<protein>
    <recommendedName>
        <fullName>Achaete-scute homolog 2</fullName>
        <shortName>ASH-2</shortName>
        <shortName>hASH2</shortName>
    </recommendedName>
    <alternativeName>
        <fullName>Class A basic helix-loop-helix protein 45</fullName>
        <shortName>bHLHa45</shortName>
    </alternativeName>
    <alternativeName>
        <fullName>Mash2</fullName>
    </alternativeName>
</protein>
<accession>Q99929</accession>
<accession>Q6PEY9</accession>
<accession>Q9UM68</accession>